<accession>A0R5D9</accession>
<keyword id="KW-0002">3D-structure</keyword>
<keyword id="KW-0903">Direct protein sequencing</keyword>
<keyword id="KW-0238">DNA-binding</keyword>
<keyword id="KW-0413">Isomerase</keyword>
<keyword id="KW-0460">Magnesium</keyword>
<keyword id="KW-0479">Metal-binding</keyword>
<keyword id="KW-1185">Reference proteome</keyword>
<keyword id="KW-0799">Topoisomerase</keyword>
<name>TOP1_MYCS2</name>
<feature type="initiator methionine" description="Removed" evidence="5">
    <location>
        <position position="1"/>
    </location>
</feature>
<feature type="chain" id="PRO_0000435621" description="DNA topoisomerase 1">
    <location>
        <begin position="2"/>
        <end position="936"/>
    </location>
</feature>
<feature type="domain" description="Toprim" evidence="1">
    <location>
        <begin position="15"/>
        <end position="139"/>
    </location>
</feature>
<feature type="domain" description="Topo IA-type catalytic" evidence="2">
    <location>
        <begin position="154"/>
        <end position="611"/>
    </location>
</feature>
<feature type="region of interest" description="Interaction with DNA" evidence="1">
    <location>
        <begin position="188"/>
        <end position="193"/>
    </location>
</feature>
<feature type="region of interest" description="Disordered" evidence="3">
    <location>
        <begin position="661"/>
        <end position="688"/>
    </location>
</feature>
<feature type="region of interest" description="Disordered" evidence="3">
    <location>
        <begin position="732"/>
        <end position="767"/>
    </location>
</feature>
<feature type="region of interest" description="Disordered" evidence="3">
    <location>
        <begin position="841"/>
        <end position="884"/>
    </location>
</feature>
<feature type="region of interest" description="Disordered" evidence="3">
    <location>
        <begin position="903"/>
        <end position="936"/>
    </location>
</feature>
<feature type="compositionally biased region" description="Basic residues" evidence="3">
    <location>
        <begin position="910"/>
        <end position="936"/>
    </location>
</feature>
<feature type="active site" description="O-(5'-phospho-DNA)-tyrosine intermediate" evidence="2 7">
    <location>
        <position position="339"/>
    </location>
</feature>
<feature type="binding site" evidence="1">
    <location>
        <position position="21"/>
    </location>
    <ligand>
        <name>Mg(2+)</name>
        <dbReference type="ChEBI" id="CHEBI:18420"/>
        <note>catalytic</note>
    </ligand>
</feature>
<feature type="binding site" evidence="1">
    <location>
        <position position="108"/>
    </location>
    <ligand>
        <name>Mg(2+)</name>
        <dbReference type="ChEBI" id="CHEBI:18420"/>
        <note>catalytic</note>
    </ligand>
</feature>
<feature type="site" description="Interaction with DNA" evidence="1">
    <location>
        <position position="45"/>
    </location>
</feature>
<feature type="site" description="Interaction with DNA" evidence="1">
    <location>
        <position position="164"/>
    </location>
</feature>
<feature type="site" description="Interaction with DNA" evidence="1">
    <location>
        <position position="165"/>
    </location>
</feature>
<feature type="site" description="Interaction with DNA" evidence="1">
    <location>
        <position position="168"/>
    </location>
</feature>
<feature type="site" description="Interaction with DNA" evidence="1">
    <location>
        <position position="173"/>
    </location>
</feature>
<feature type="site" description="Interaction with DNA" evidence="1">
    <location>
        <position position="180"/>
    </location>
</feature>
<feature type="site" description="Interaction with DNA" evidence="1">
    <location>
        <position position="341"/>
    </location>
</feature>
<feature type="site" description="Interaction with DNA" evidence="1">
    <location>
        <position position="542"/>
    </location>
</feature>
<feature type="sequence conflict" description="In Ref. 4; AA sequence." evidence="6" ref="4">
    <original>D</original>
    <variation>S</variation>
    <location>
        <position position="5"/>
    </location>
</feature>
<feature type="sequence conflict" description="In Ref. 4; AA sequence." evidence="6" ref="4">
    <original>T</original>
    <variation>A</variation>
    <location>
        <position position="11"/>
    </location>
</feature>
<feature type="strand" evidence="8">
    <location>
        <begin position="16"/>
        <end position="21"/>
    </location>
</feature>
<feature type="helix" evidence="8">
    <location>
        <begin position="23"/>
        <end position="32"/>
    </location>
</feature>
<feature type="strand" evidence="8">
    <location>
        <begin position="37"/>
        <end position="41"/>
    </location>
</feature>
<feature type="strand" evidence="8">
    <location>
        <begin position="46"/>
        <end position="48"/>
    </location>
</feature>
<feature type="turn" evidence="8">
    <location>
        <begin position="53"/>
        <end position="55"/>
    </location>
</feature>
<feature type="helix" evidence="8">
    <location>
        <begin position="58"/>
        <end position="62"/>
    </location>
</feature>
<feature type="strand" evidence="8">
    <location>
        <begin position="67"/>
        <end position="71"/>
    </location>
</feature>
<feature type="helix" evidence="8">
    <location>
        <begin position="72"/>
        <end position="74"/>
    </location>
</feature>
<feature type="turn" evidence="8">
    <location>
        <begin position="84"/>
        <end position="86"/>
    </location>
</feature>
<feature type="helix" evidence="8">
    <location>
        <begin position="87"/>
        <end position="97"/>
    </location>
</feature>
<feature type="strand" evidence="8">
    <location>
        <begin position="101"/>
        <end position="105"/>
    </location>
</feature>
<feature type="helix" evidence="8">
    <location>
        <begin position="111"/>
        <end position="124"/>
    </location>
</feature>
<feature type="strand" evidence="8">
    <location>
        <begin position="130"/>
        <end position="132"/>
    </location>
</feature>
<feature type="helix" evidence="8">
    <location>
        <begin position="140"/>
        <end position="148"/>
    </location>
</feature>
<feature type="helix" evidence="8">
    <location>
        <begin position="155"/>
        <end position="182"/>
    </location>
</feature>
<feature type="helix" evidence="8">
    <location>
        <begin position="193"/>
        <end position="208"/>
    </location>
</feature>
<feature type="strand" evidence="8">
    <location>
        <begin position="214"/>
        <end position="222"/>
    </location>
</feature>
<feature type="helix" evidence="8">
    <location>
        <begin position="224"/>
        <end position="226"/>
    </location>
</feature>
<feature type="strand" evidence="8">
    <location>
        <begin position="236"/>
        <end position="243"/>
    </location>
</feature>
<feature type="strand" evidence="8">
    <location>
        <begin position="246"/>
        <end position="248"/>
    </location>
</feature>
<feature type="turn" evidence="8">
    <location>
        <begin position="255"/>
        <end position="257"/>
    </location>
</feature>
<feature type="turn" evidence="8">
    <location>
        <begin position="263"/>
        <end position="265"/>
    </location>
</feature>
<feature type="helix" evidence="8">
    <location>
        <begin position="271"/>
        <end position="280"/>
    </location>
</feature>
<feature type="strand" evidence="8">
    <location>
        <begin position="285"/>
        <end position="294"/>
    </location>
</feature>
<feature type="helix" evidence="8">
    <location>
        <begin position="306"/>
        <end position="316"/>
    </location>
</feature>
<feature type="helix" evidence="8">
    <location>
        <begin position="321"/>
        <end position="333"/>
    </location>
</feature>
<feature type="helix" evidence="8">
    <location>
        <begin position="349"/>
        <end position="362"/>
    </location>
</feature>
<feature type="strand" evidence="8">
    <location>
        <begin position="391"/>
        <end position="395"/>
    </location>
</feature>
<feature type="helix" evidence="8">
    <location>
        <begin position="399"/>
        <end position="402"/>
    </location>
</feature>
<feature type="turn" evidence="8">
    <location>
        <begin position="403"/>
        <end position="405"/>
    </location>
</feature>
<feature type="helix" evidence="8">
    <location>
        <begin position="408"/>
        <end position="423"/>
    </location>
</feature>
<feature type="strand" evidence="8">
    <location>
        <begin position="429"/>
        <end position="439"/>
    </location>
</feature>
<feature type="strand" evidence="8">
    <location>
        <begin position="443"/>
        <end position="445"/>
    </location>
</feature>
<feature type="strand" evidence="8">
    <location>
        <begin position="448"/>
        <end position="459"/>
    </location>
</feature>
<feature type="helix" evidence="8">
    <location>
        <begin position="461"/>
        <end position="465"/>
    </location>
</feature>
<feature type="strand" evidence="8">
    <location>
        <begin position="493"/>
        <end position="495"/>
    </location>
</feature>
<feature type="strand" evidence="8">
    <location>
        <begin position="499"/>
        <end position="505"/>
    </location>
</feature>
<feature type="helix" evidence="8">
    <location>
        <begin position="514"/>
        <end position="522"/>
    </location>
</feature>
<feature type="turn" evidence="8">
    <location>
        <begin position="523"/>
        <end position="525"/>
    </location>
</feature>
<feature type="turn" evidence="8">
    <location>
        <begin position="529"/>
        <end position="531"/>
    </location>
</feature>
<feature type="helix" evidence="8">
    <location>
        <begin position="532"/>
        <end position="540"/>
    </location>
</feature>
<feature type="turn" evidence="8">
    <location>
        <begin position="541"/>
        <end position="543"/>
    </location>
</feature>
<feature type="strand" evidence="8">
    <location>
        <begin position="544"/>
        <end position="547"/>
    </location>
</feature>
<feature type="strand" evidence="8">
    <location>
        <begin position="549"/>
        <end position="554"/>
    </location>
</feature>
<feature type="helix" evidence="8">
    <location>
        <begin position="556"/>
        <end position="568"/>
    </location>
</feature>
<feature type="helix" evidence="8">
    <location>
        <begin position="570"/>
        <end position="573"/>
    </location>
</feature>
<feature type="helix" evidence="8">
    <location>
        <begin position="576"/>
        <end position="589"/>
    </location>
</feature>
<feature type="helix" evidence="8">
    <location>
        <begin position="595"/>
        <end position="604"/>
    </location>
</feature>
<feature type="strand" evidence="8">
    <location>
        <begin position="610"/>
        <end position="612"/>
    </location>
</feature>
<feature type="turn" evidence="8">
    <location>
        <begin position="615"/>
        <end position="618"/>
    </location>
</feature>
<feature type="helix" evidence="8">
    <location>
        <begin position="620"/>
        <end position="625"/>
    </location>
</feature>
<feature type="helix" evidence="8">
    <location>
        <begin position="633"/>
        <end position="637"/>
    </location>
</feature>
<feature type="strand" evidence="8">
    <location>
        <begin position="649"/>
        <end position="653"/>
    </location>
</feature>
<feature type="strand" evidence="8">
    <location>
        <begin position="655"/>
        <end position="658"/>
    </location>
</feature>
<feature type="strand" evidence="8">
    <location>
        <begin position="660"/>
        <end position="665"/>
    </location>
</feature>
<feature type="strand" evidence="8">
    <location>
        <begin position="668"/>
        <end position="673"/>
    </location>
</feature>
<feature type="strand" evidence="8">
    <location>
        <begin position="675"/>
        <end position="680"/>
    </location>
</feature>
<feature type="helix" evidence="8">
    <location>
        <begin position="687"/>
        <end position="689"/>
    </location>
</feature>
<feature type="helix" evidence="8">
    <location>
        <begin position="692"/>
        <end position="700"/>
    </location>
</feature>
<feature type="strand" evidence="8">
    <location>
        <begin position="703"/>
        <end position="710"/>
    </location>
</feature>
<feature type="turn" evidence="8">
    <location>
        <begin position="712"/>
        <end position="714"/>
    </location>
</feature>
<feature type="strand" evidence="8">
    <location>
        <begin position="717"/>
        <end position="722"/>
    </location>
</feature>
<feature type="strand" evidence="8">
    <location>
        <begin position="724"/>
        <end position="731"/>
    </location>
</feature>
<feature type="strand" evidence="8">
    <location>
        <begin position="762"/>
        <end position="764"/>
    </location>
</feature>
<feature type="turn" evidence="8">
    <location>
        <begin position="771"/>
        <end position="773"/>
    </location>
</feature>
<feature type="helix" evidence="8">
    <location>
        <begin position="776"/>
        <end position="782"/>
    </location>
</feature>
<feature type="strand" evidence="8">
    <location>
        <begin position="786"/>
        <end position="791"/>
    </location>
</feature>
<feature type="turn" evidence="8">
    <location>
        <begin position="793"/>
        <end position="795"/>
    </location>
</feature>
<feature type="strand" evidence="8">
    <location>
        <begin position="798"/>
        <end position="804"/>
    </location>
</feature>
<feature type="strand" evidence="8">
    <location>
        <begin position="807"/>
        <end position="812"/>
    </location>
</feature>
<feature type="strand" evidence="8">
    <location>
        <begin position="815"/>
        <end position="818"/>
    </location>
</feature>
<feature type="helix" evidence="8">
    <location>
        <begin position="824"/>
        <end position="827"/>
    </location>
</feature>
<feature type="helix" evidence="8">
    <location>
        <begin position="830"/>
        <end position="836"/>
    </location>
</feature>
<gene>
    <name evidence="1" type="primary">topA</name>
    <name type="ordered locus">MSMEG_6157</name>
    <name type="ordered locus">MSMEI_5999</name>
</gene>
<evidence type="ECO:0000255" key="1">
    <source>
        <dbReference type="HAMAP-Rule" id="MF_00952"/>
    </source>
</evidence>
<evidence type="ECO:0000255" key="2">
    <source>
        <dbReference type="PROSITE-ProRule" id="PRU01383"/>
    </source>
</evidence>
<evidence type="ECO:0000256" key="3">
    <source>
        <dbReference type="SAM" id="MobiDB-lite"/>
    </source>
</evidence>
<evidence type="ECO:0000269" key="4">
    <source>
    </source>
</evidence>
<evidence type="ECO:0000269" key="5">
    <source>
    </source>
</evidence>
<evidence type="ECO:0000305" key="6"/>
<evidence type="ECO:0000305" key="7">
    <source>
    </source>
</evidence>
<evidence type="ECO:0007829" key="8">
    <source>
        <dbReference type="PDB" id="6PCM"/>
    </source>
</evidence>
<proteinExistence type="evidence at protein level"/>
<sequence>MAGGDRGSGGTGNVRRLVIVESPTKARKIAGYLGSNYVVESSRGHIRDLPRNAADVPAKFKSEPWARLGVNVDQNFEPLYIVSPEKKSTVTELKGLLKDVDELYLATDGDREGEAIAWHLLETLKPRVPVKRMVFHEITEPAIRNAAENPRDLDIALVDAQETRRILDRLYGYEVSPVLWKKVAPKLSAGRVQSVATRIIVQRERERMAFHSASYWDVTAELDASVSDPSASPPKFTAKLNTVDGRRVATGRDFDSLGQLKRPDEVLVLDEASAGALASGLRGAQLAVTSVEQKPYTRRPYAPFMTSTLQQEAARKLRFSSERTMSIAQRLYENGYITYMRTDSTTLSESAINAARTQARQLYGEEYVHPSPRQYTRKVKNAQEAHEAIRPAGDVFQTPGQLHSALDTDEFRLYELIWQRTVASQMADARGTTLSLRIGGSASSGEQVVFNASGRTITFPGFLKAYVESIDELAGGESDDAESRLPNLTQGQRVDAADLSADGHQTSPPARYTEASLIKALEELGIGRPSTYSSIIKTIQDRGYVQKKGSALVPSWVAFAVVGLLEQHFGRLVDYDFTAAMEDELDEIANGQEQRTNWLNNFYFGGEHGVEGSIARAGGLKQLVGGNLEGIDAREVNSIKVFDDSEGRPVYVRVGRNGPYLERMVDDPDNPGEQKPQRANLKEDLTPDELTPELAEKLFATPQEGRSLGIDPETGHEIVAKDGRFGPYVTEVLPEPEDGGDDGTAGTPAKKGKKPTGPKPRTGSLFRSMDLETVTLEDALKLLSLPRVVGVDPTTNEEITAQNGRYGPYLKRGTDSRSLATEDQIFTITLDEALKIYAEPKRRGRQAASAPPLRELGNDPVSGKPMVIKDGRFGPYVTDGETNASLRKGDDVLTITDERASELLADRRARGPVKKKAPAKKAAKKAPAKKAAAKKA</sequence>
<protein>
    <recommendedName>
        <fullName evidence="1">DNA topoisomerase 1</fullName>
        <ecNumber evidence="1">5.6.2.1</ecNumber>
    </recommendedName>
    <alternativeName>
        <fullName evidence="1">DNA topoisomerase I</fullName>
    </alternativeName>
</protein>
<organism>
    <name type="scientific">Mycolicibacterium smegmatis (strain ATCC 700084 / mc(2)155)</name>
    <name type="common">Mycobacterium smegmatis</name>
    <dbReference type="NCBI Taxonomy" id="246196"/>
    <lineage>
        <taxon>Bacteria</taxon>
        <taxon>Bacillati</taxon>
        <taxon>Actinomycetota</taxon>
        <taxon>Actinomycetes</taxon>
        <taxon>Mycobacteriales</taxon>
        <taxon>Mycobacteriaceae</taxon>
        <taxon>Mycolicibacterium</taxon>
    </lineage>
</organism>
<reference key="1">
    <citation type="submission" date="2006-10" db="EMBL/GenBank/DDBJ databases">
        <authorList>
            <person name="Fleischmann R.D."/>
            <person name="Dodson R.J."/>
            <person name="Haft D.H."/>
            <person name="Merkel J.S."/>
            <person name="Nelson W.C."/>
            <person name="Fraser C.M."/>
        </authorList>
    </citation>
    <scope>NUCLEOTIDE SEQUENCE [LARGE SCALE GENOMIC DNA]</scope>
    <source>
        <strain>ATCC 700084 / mc(2)155</strain>
    </source>
</reference>
<reference key="2">
    <citation type="journal article" date="2007" name="Genome Biol.">
        <title>Interrupted coding sequences in Mycobacterium smegmatis: authentic mutations or sequencing errors?</title>
        <authorList>
            <person name="Deshayes C."/>
            <person name="Perrodou E."/>
            <person name="Gallien S."/>
            <person name="Euphrasie D."/>
            <person name="Schaeffer C."/>
            <person name="Van-Dorsselaer A."/>
            <person name="Poch O."/>
            <person name="Lecompte O."/>
            <person name="Reyrat J.-M."/>
        </authorList>
    </citation>
    <scope>NUCLEOTIDE SEQUENCE [LARGE SCALE GENOMIC DNA]</scope>
    <source>
        <strain>ATCC 700084 / mc(2)155</strain>
    </source>
</reference>
<reference key="3">
    <citation type="journal article" date="2009" name="Genome Res.">
        <title>Ortho-proteogenomics: multiple proteomes investigation through orthology and a new MS-based protocol.</title>
        <authorList>
            <person name="Gallien S."/>
            <person name="Perrodou E."/>
            <person name="Carapito C."/>
            <person name="Deshayes C."/>
            <person name="Reyrat J.-M."/>
            <person name="Van Dorsselaer A."/>
            <person name="Poch O."/>
            <person name="Schaeffer C."/>
            <person name="Lecompte O."/>
        </authorList>
    </citation>
    <scope>NUCLEOTIDE SEQUENCE [LARGE SCALE GENOMIC DNA]</scope>
    <source>
        <strain>ATCC 700084 / mc(2)155</strain>
    </source>
</reference>
<reference key="4">
    <citation type="journal article" date="1998" name="J. Biol. Chem.">
        <title>DNA topoisomerase I from Mycobacterium smegmatis. An enzyme with distinct features.</title>
        <authorList>
            <person name="Bhaduri T."/>
            <person name="Bagui T.K."/>
            <person name="Sikder D."/>
            <person name="Nagaraja V."/>
        </authorList>
    </citation>
    <scope>PROTEIN SEQUENCE OF 2-11</scope>
    <scope>FUNCTION</scope>
    <scope>COFACTOR</scope>
    <scope>BIOPHYSICOCHEMICAL PROPERTIES</scope>
    <scope>ACTIVE SITE</scope>
    <scope>DNA-BINDING</scope>
    <source>
        <strain>ATCC 27204 / DSM 43464 / SN2</strain>
    </source>
</reference>
<reference key="5">
    <citation type="journal article" date="2000" name="Nucleic Acids Res.">
        <title>Determination of the recognition sequence of Mycobacterium smegmatis topoisomerase I on mycobacterial genomic sequences.</title>
        <authorList>
            <person name="Sikder D."/>
            <person name="Nagaraja V."/>
        </authorList>
    </citation>
    <scope>FUNCTION</scope>
    <scope>SUBSTRATE SPECIFICITY</scope>
    <scope>DNA-BINDING</scope>
    <source>
        <strain>ATCC 27204 / DSM 43464 / SN2</strain>
    </source>
</reference>
<comment type="function">
    <text evidence="1 5">Releases the supercoiling and torsional tension of DNA, which is introduced during the DNA replication and transcription, by transiently cleaving and rejoining one strand of the DNA duplex. Introduces a single-strand break via transesterification at a target site in duplex DNA. The scissile phosphodiester is attacked by the catalytic tyrosine of the enzyme, resulting in the formation of a DNA-(5'-phosphotyrosyl)-enzyme intermediate (PubMed:9593741) and the expulsion of a 3'-OH DNA strand. The free DNA strand then undergoes passage around the unbroken strand, thus removing DNA supercoils. Finally, in the religation step, the DNA 3'-OH attacks the covalent intermediate to expel the active-site tyrosine and restore the DNA phosphodiester backbone (By similarity).</text>
</comment>
<comment type="function">
    <text evidence="4 5">Relaxes negatively (but not positively) supercoiled DNA, concatanates and knots circular ssDNA at 52 but not 37 degrees Celsius (PubMed:9593741). Preferentially nicks supercoiled DNA at C(G/T)CTT, cutting between the TT residues, binds ss and dsDNA with the recognition site (PubMed:10734203).</text>
</comment>
<comment type="catalytic activity">
    <reaction evidence="1">
        <text>ATP-independent breakage of single-stranded DNA, followed by passage and rejoining.</text>
        <dbReference type="EC" id="5.6.2.1"/>
    </reaction>
</comment>
<comment type="cofactor">
    <cofactor evidence="1 5">
        <name>Mg(2+)</name>
        <dbReference type="ChEBI" id="CHEBI:18420"/>
    </cofactor>
</comment>
<comment type="biophysicochemical properties">
    <temperatureDependence>
        <text evidence="5">Optimum temperature is 30-42 degrees Celsius. Partially active up to 65 degrees Celsius (PubMed:9593741).</text>
    </temperatureDependence>
</comment>
<comment type="subunit">
    <text evidence="1">Monomer.</text>
</comment>
<comment type="similarity">
    <text evidence="1">Belongs to the type IA topoisomerase family.</text>
</comment>
<dbReference type="EC" id="5.6.2.1" evidence="1"/>
<dbReference type="EMBL" id="CP000480">
    <property type="protein sequence ID" value="ABK69586.1"/>
    <property type="molecule type" value="Genomic_DNA"/>
</dbReference>
<dbReference type="EMBL" id="CP001663">
    <property type="protein sequence ID" value="AFP42431.1"/>
    <property type="molecule type" value="Genomic_DNA"/>
</dbReference>
<dbReference type="RefSeq" id="WP_011731080.1">
    <property type="nucleotide sequence ID" value="NZ_SIJM01000072.1"/>
</dbReference>
<dbReference type="RefSeq" id="YP_890377.1">
    <property type="nucleotide sequence ID" value="NC_008596.1"/>
</dbReference>
<dbReference type="PDB" id="6PCM">
    <property type="method" value="X-ray"/>
    <property type="resolution" value="3.11 A"/>
    <property type="chains" value="A/B=1-839"/>
</dbReference>
<dbReference type="PDBsum" id="6PCM"/>
<dbReference type="SMR" id="A0R5D9"/>
<dbReference type="STRING" id="246196.MSMEG_6157"/>
<dbReference type="PaxDb" id="246196-MSMEI_5999"/>
<dbReference type="GeneID" id="93460786"/>
<dbReference type="KEGG" id="msb:LJ00_30450"/>
<dbReference type="KEGG" id="msg:MSMEI_5999"/>
<dbReference type="KEGG" id="msm:MSMEG_6157"/>
<dbReference type="PATRIC" id="fig|246196.19.peg.5996"/>
<dbReference type="eggNOG" id="COG0550">
    <property type="taxonomic scope" value="Bacteria"/>
</dbReference>
<dbReference type="eggNOG" id="COG1754">
    <property type="taxonomic scope" value="Bacteria"/>
</dbReference>
<dbReference type="OrthoDB" id="9804262at2"/>
<dbReference type="Proteomes" id="UP000000757">
    <property type="component" value="Chromosome"/>
</dbReference>
<dbReference type="Proteomes" id="UP000006158">
    <property type="component" value="Chromosome"/>
</dbReference>
<dbReference type="GO" id="GO:0003677">
    <property type="term" value="F:DNA binding"/>
    <property type="evidence" value="ECO:0007669"/>
    <property type="project" value="UniProtKB-KW"/>
</dbReference>
<dbReference type="GO" id="GO:0003917">
    <property type="term" value="F:DNA topoisomerase type I (single strand cut, ATP-independent) activity"/>
    <property type="evidence" value="ECO:0007669"/>
    <property type="project" value="UniProtKB-UniRule"/>
</dbReference>
<dbReference type="GO" id="GO:0046872">
    <property type="term" value="F:metal ion binding"/>
    <property type="evidence" value="ECO:0007669"/>
    <property type="project" value="UniProtKB-KW"/>
</dbReference>
<dbReference type="GO" id="GO:0006265">
    <property type="term" value="P:DNA topological change"/>
    <property type="evidence" value="ECO:0007669"/>
    <property type="project" value="UniProtKB-UniRule"/>
</dbReference>
<dbReference type="CDD" id="cd00186">
    <property type="entry name" value="TOP1Ac"/>
    <property type="match status" value="1"/>
</dbReference>
<dbReference type="CDD" id="cd03363">
    <property type="entry name" value="TOPRIM_TopoIA_TopoI"/>
    <property type="match status" value="1"/>
</dbReference>
<dbReference type="FunFam" id="1.10.290.10:FF:000002">
    <property type="entry name" value="DNA topoisomerase 1"/>
    <property type="match status" value="1"/>
</dbReference>
<dbReference type="FunFam" id="3.40.50.140:FF:000001">
    <property type="entry name" value="DNA topoisomerase 1"/>
    <property type="match status" value="1"/>
</dbReference>
<dbReference type="Gene3D" id="3.40.50.140">
    <property type="match status" value="1"/>
</dbReference>
<dbReference type="Gene3D" id="1.10.460.10">
    <property type="entry name" value="Topoisomerase I, domain 2"/>
    <property type="match status" value="1"/>
</dbReference>
<dbReference type="Gene3D" id="2.70.20.10">
    <property type="entry name" value="Topoisomerase I, domain 3"/>
    <property type="match status" value="1"/>
</dbReference>
<dbReference type="Gene3D" id="1.10.290.10">
    <property type="entry name" value="Topoisomerase I, domain 4"/>
    <property type="match status" value="1"/>
</dbReference>
<dbReference type="HAMAP" id="MF_00952">
    <property type="entry name" value="Topoisom_1_prok"/>
    <property type="match status" value="1"/>
</dbReference>
<dbReference type="InterPro" id="IPR000380">
    <property type="entry name" value="Topo_IA"/>
</dbReference>
<dbReference type="InterPro" id="IPR003601">
    <property type="entry name" value="Topo_IA_2"/>
</dbReference>
<dbReference type="InterPro" id="IPR023406">
    <property type="entry name" value="Topo_IA_AS"/>
</dbReference>
<dbReference type="InterPro" id="IPR013497">
    <property type="entry name" value="Topo_IA_cen"/>
</dbReference>
<dbReference type="InterPro" id="IPR013824">
    <property type="entry name" value="Topo_IA_cen_sub1"/>
</dbReference>
<dbReference type="InterPro" id="IPR013825">
    <property type="entry name" value="Topo_IA_cen_sub2"/>
</dbReference>
<dbReference type="InterPro" id="IPR013826">
    <property type="entry name" value="Topo_IA_cen_sub3"/>
</dbReference>
<dbReference type="InterPro" id="IPR023405">
    <property type="entry name" value="Topo_IA_core_domain"/>
</dbReference>
<dbReference type="InterPro" id="IPR003602">
    <property type="entry name" value="Topo_IA_DNA-bd_dom"/>
</dbReference>
<dbReference type="InterPro" id="IPR005733">
    <property type="entry name" value="TopoI_bac-type"/>
</dbReference>
<dbReference type="InterPro" id="IPR028612">
    <property type="entry name" value="Topoisom_1_IA"/>
</dbReference>
<dbReference type="InterPro" id="IPR025589">
    <property type="entry name" value="Toprim_C_rpt"/>
</dbReference>
<dbReference type="InterPro" id="IPR006171">
    <property type="entry name" value="TOPRIM_dom"/>
</dbReference>
<dbReference type="InterPro" id="IPR034149">
    <property type="entry name" value="TOPRIM_TopoI"/>
</dbReference>
<dbReference type="NCBIfam" id="TIGR01051">
    <property type="entry name" value="topA_bact"/>
    <property type="match status" value="1"/>
</dbReference>
<dbReference type="PANTHER" id="PTHR42785:SF1">
    <property type="entry name" value="DNA TOPOISOMERASE"/>
    <property type="match status" value="1"/>
</dbReference>
<dbReference type="PANTHER" id="PTHR42785">
    <property type="entry name" value="DNA TOPOISOMERASE, TYPE IA, CORE"/>
    <property type="match status" value="1"/>
</dbReference>
<dbReference type="Pfam" id="PF01131">
    <property type="entry name" value="Topoisom_bac"/>
    <property type="match status" value="1"/>
</dbReference>
<dbReference type="Pfam" id="PF01751">
    <property type="entry name" value="Toprim"/>
    <property type="match status" value="1"/>
</dbReference>
<dbReference type="Pfam" id="PF13368">
    <property type="entry name" value="Toprim_C_rpt"/>
    <property type="match status" value="4"/>
</dbReference>
<dbReference type="PRINTS" id="PR00417">
    <property type="entry name" value="PRTPISMRASEI"/>
</dbReference>
<dbReference type="SMART" id="SM00437">
    <property type="entry name" value="TOP1Ac"/>
    <property type="match status" value="1"/>
</dbReference>
<dbReference type="SMART" id="SM00436">
    <property type="entry name" value="TOP1Bc"/>
    <property type="match status" value="1"/>
</dbReference>
<dbReference type="SMART" id="SM00493">
    <property type="entry name" value="TOPRIM"/>
    <property type="match status" value="1"/>
</dbReference>
<dbReference type="SUPFAM" id="SSF56712">
    <property type="entry name" value="Prokaryotic type I DNA topoisomerase"/>
    <property type="match status" value="1"/>
</dbReference>
<dbReference type="PROSITE" id="PS00396">
    <property type="entry name" value="TOPO_IA_1"/>
    <property type="match status" value="1"/>
</dbReference>
<dbReference type="PROSITE" id="PS52039">
    <property type="entry name" value="TOPO_IA_2"/>
    <property type="match status" value="1"/>
</dbReference>
<dbReference type="PROSITE" id="PS50880">
    <property type="entry name" value="TOPRIM"/>
    <property type="match status" value="1"/>
</dbReference>